<dbReference type="EC" id="3.4.-.-" evidence="32"/>
<dbReference type="EMBL" id="DQ117583">
    <property type="protein sequence ID" value="AAZ40509.1"/>
    <property type="molecule type" value="mRNA"/>
</dbReference>
<dbReference type="EMBL" id="DQ117584">
    <property type="protein sequence ID" value="AAZ40510.1"/>
    <property type="molecule type" value="mRNA"/>
</dbReference>
<dbReference type="EMBL" id="DQ117585">
    <property type="protein sequence ID" value="AAZ40511.1"/>
    <property type="molecule type" value="mRNA"/>
</dbReference>
<dbReference type="EMBL" id="DQ117586">
    <property type="protein sequence ID" value="AAZ40512.1"/>
    <property type="molecule type" value="mRNA"/>
</dbReference>
<dbReference type="EMBL" id="DQ117587">
    <property type="protein sequence ID" value="AAZ40513.1"/>
    <property type="molecule type" value="mRNA"/>
</dbReference>
<dbReference type="EMBL" id="DQ117588">
    <property type="protein sequence ID" value="AAZ40514.1"/>
    <property type="molecule type" value="mRNA"/>
</dbReference>
<dbReference type="EMBL" id="DQ117589">
    <property type="protein sequence ID" value="AAZ40515.1"/>
    <property type="molecule type" value="mRNA"/>
</dbReference>
<dbReference type="EMBL" id="DQ117590">
    <property type="protein sequence ID" value="AAZ40516.1"/>
    <property type="molecule type" value="mRNA"/>
</dbReference>
<dbReference type="SMR" id="Q2LKW6"/>
<dbReference type="ComplexPortal" id="CPX-4261">
    <property type="entry name" value="NLRP1b inflammasome, allele-1 variant"/>
</dbReference>
<dbReference type="IntAct" id="Q2LKW6">
    <property type="interactions" value="1"/>
</dbReference>
<dbReference type="AGR" id="MGI:3582959"/>
<dbReference type="MGI" id="MGI:3582959">
    <property type="gene designation" value="Nlrp1b"/>
</dbReference>
<dbReference type="OrthoDB" id="428577at2759"/>
<dbReference type="GO" id="GO:0005737">
    <property type="term" value="C:cytoplasm"/>
    <property type="evidence" value="ECO:0000303"/>
    <property type="project" value="ComplexPortal"/>
</dbReference>
<dbReference type="GO" id="GO:0016020">
    <property type="term" value="C:membrane"/>
    <property type="evidence" value="ECO:0007669"/>
    <property type="project" value="UniProtKB-SubCell"/>
</dbReference>
<dbReference type="GO" id="GO:0072558">
    <property type="term" value="C:NLRP1 inflammasome complex"/>
    <property type="evidence" value="ECO:0000303"/>
    <property type="project" value="ComplexPortal"/>
</dbReference>
<dbReference type="GO" id="GO:0005524">
    <property type="term" value="F:ATP binding"/>
    <property type="evidence" value="ECO:0007669"/>
    <property type="project" value="UniProtKB-KW"/>
</dbReference>
<dbReference type="GO" id="GO:0008233">
    <property type="term" value="F:peptidase activity"/>
    <property type="evidence" value="ECO:0007669"/>
    <property type="project" value="UniProtKB-KW"/>
</dbReference>
<dbReference type="GO" id="GO:0045087">
    <property type="term" value="P:innate immune response"/>
    <property type="evidence" value="ECO:0007669"/>
    <property type="project" value="UniProtKB-KW"/>
</dbReference>
<dbReference type="GO" id="GO:0002221">
    <property type="term" value="P:pattern recognition receptor signaling pathway"/>
    <property type="evidence" value="ECO:0000303"/>
    <property type="project" value="ComplexPortal"/>
</dbReference>
<dbReference type="GO" id="GO:0050729">
    <property type="term" value="P:positive regulation of inflammatory response"/>
    <property type="evidence" value="ECO:0000303"/>
    <property type="project" value="ComplexPortal"/>
</dbReference>
<dbReference type="GO" id="GO:0032731">
    <property type="term" value="P:positive regulation of interleukin-1 beta production"/>
    <property type="evidence" value="ECO:0000303"/>
    <property type="project" value="ComplexPortal"/>
</dbReference>
<dbReference type="GO" id="GO:0012501">
    <property type="term" value="P:programmed cell death"/>
    <property type="evidence" value="ECO:0007669"/>
    <property type="project" value="UniProtKB-KW"/>
</dbReference>
<dbReference type="GO" id="GO:0030163">
    <property type="term" value="P:protein catabolic process"/>
    <property type="evidence" value="ECO:0000315"/>
    <property type="project" value="MGI"/>
</dbReference>
<dbReference type="GO" id="GO:0006508">
    <property type="term" value="P:proteolysis"/>
    <property type="evidence" value="ECO:0007669"/>
    <property type="project" value="UniProtKB-KW"/>
</dbReference>
<dbReference type="GO" id="GO:0070269">
    <property type="term" value="P:pyroptotic inflammatory response"/>
    <property type="evidence" value="ECO:0000315"/>
    <property type="project" value="MGI"/>
</dbReference>
<dbReference type="GO" id="GO:0042981">
    <property type="term" value="P:regulation of apoptotic process"/>
    <property type="evidence" value="ECO:0007669"/>
    <property type="project" value="InterPro"/>
</dbReference>
<dbReference type="CDD" id="cd08330">
    <property type="entry name" value="CARD_ASC_NALP1"/>
    <property type="match status" value="1"/>
</dbReference>
<dbReference type="FunFam" id="1.10.533.10:FF:000013">
    <property type="entry name" value="Apoptosis-associated speck-like protein containing a CARD"/>
    <property type="match status" value="1"/>
</dbReference>
<dbReference type="FunFam" id="3.40.50.300:FF:000897">
    <property type="entry name" value="NLR family pyrin domain containing 1"/>
    <property type="match status" value="1"/>
</dbReference>
<dbReference type="FunFam" id="3.80.10.10:FF:000622">
    <property type="entry name" value="NLR family, pyrin domain containing 1B, PWK/PhJ specific, allele 1"/>
    <property type="match status" value="1"/>
</dbReference>
<dbReference type="Gene3D" id="1.10.533.10">
    <property type="entry name" value="Death Domain, Fas"/>
    <property type="match status" value="1"/>
</dbReference>
<dbReference type="Gene3D" id="3.40.50.300">
    <property type="entry name" value="P-loop containing nucleotide triphosphate hydrolases"/>
    <property type="match status" value="1"/>
</dbReference>
<dbReference type="Gene3D" id="3.80.10.10">
    <property type="entry name" value="Ribonuclease Inhibitor"/>
    <property type="match status" value="1"/>
</dbReference>
<dbReference type="InterPro" id="IPR001315">
    <property type="entry name" value="CARD"/>
</dbReference>
<dbReference type="InterPro" id="IPR033516">
    <property type="entry name" value="CARD8/ASC/NALP1_CARD"/>
</dbReference>
<dbReference type="InterPro" id="IPR011029">
    <property type="entry name" value="DEATH-like_dom_sf"/>
</dbReference>
<dbReference type="InterPro" id="IPR025307">
    <property type="entry name" value="FIIND_dom"/>
</dbReference>
<dbReference type="InterPro" id="IPR032675">
    <property type="entry name" value="LRR_dom_sf"/>
</dbReference>
<dbReference type="InterPro" id="IPR007111">
    <property type="entry name" value="NACHT_NTPase"/>
</dbReference>
<dbReference type="InterPro" id="IPR041267">
    <property type="entry name" value="NLRP_HD2"/>
</dbReference>
<dbReference type="InterPro" id="IPR051249">
    <property type="entry name" value="NLRP_Inflammasome"/>
</dbReference>
<dbReference type="InterPro" id="IPR041075">
    <property type="entry name" value="NOD1/2_WH"/>
</dbReference>
<dbReference type="InterPro" id="IPR027417">
    <property type="entry name" value="P-loop_NTPase"/>
</dbReference>
<dbReference type="PANTHER" id="PTHR46985">
    <property type="entry name" value="NACHT, LRR AND PYD DOMAINS-CONTAINING PROTEIN 1"/>
    <property type="match status" value="1"/>
</dbReference>
<dbReference type="PANTHER" id="PTHR46985:SF6">
    <property type="entry name" value="NACHT, LRR AND PYD DOMAINS-CONTAINING PROTEIN 1B ALLELE 2"/>
    <property type="match status" value="1"/>
</dbReference>
<dbReference type="Pfam" id="PF00619">
    <property type="entry name" value="CARD"/>
    <property type="match status" value="1"/>
</dbReference>
<dbReference type="Pfam" id="PF13553">
    <property type="entry name" value="FIIND"/>
    <property type="match status" value="1"/>
</dbReference>
<dbReference type="Pfam" id="PF05729">
    <property type="entry name" value="NACHT"/>
    <property type="match status" value="1"/>
</dbReference>
<dbReference type="Pfam" id="PF17776">
    <property type="entry name" value="NLRC4_HD2"/>
    <property type="match status" value="1"/>
</dbReference>
<dbReference type="Pfam" id="PF17779">
    <property type="entry name" value="NOD2_WH"/>
    <property type="match status" value="1"/>
</dbReference>
<dbReference type="Pfam" id="PF23679">
    <property type="entry name" value="UPA-FIIND"/>
    <property type="match status" value="1"/>
</dbReference>
<dbReference type="PRINTS" id="PR00364">
    <property type="entry name" value="DISEASERSIST"/>
</dbReference>
<dbReference type="SMART" id="SM00368">
    <property type="entry name" value="LRR_RI"/>
    <property type="match status" value="3"/>
</dbReference>
<dbReference type="SUPFAM" id="SSF47986">
    <property type="entry name" value="DEATH domain"/>
    <property type="match status" value="1"/>
</dbReference>
<dbReference type="SUPFAM" id="SSF52540">
    <property type="entry name" value="P-loop containing nucleoside triphosphate hydrolases"/>
    <property type="match status" value="1"/>
</dbReference>
<dbReference type="SUPFAM" id="SSF52047">
    <property type="entry name" value="RNI-like"/>
    <property type="match status" value="1"/>
</dbReference>
<dbReference type="PROSITE" id="PS50209">
    <property type="entry name" value="CARD"/>
    <property type="match status" value="1"/>
</dbReference>
<dbReference type="PROSITE" id="PS51830">
    <property type="entry name" value="FIIND"/>
    <property type="match status" value="1"/>
</dbReference>
<dbReference type="PROSITE" id="PS51450">
    <property type="entry name" value="LRR"/>
    <property type="match status" value="2"/>
</dbReference>
<dbReference type="PROSITE" id="PS50837">
    <property type="entry name" value="NACHT"/>
    <property type="match status" value="1"/>
</dbReference>
<gene>
    <name evidence="29" type="primary">Nlrp1b</name>
    <name evidence="28" type="synonym">Nalp1b</name>
</gene>
<proteinExistence type="evidence at protein level"/>
<name>NL1B1_MOUSE</name>
<protein>
    <recommendedName>
        <fullName evidence="28">NACHT, LRR and PYD domains-containing protein 1b allele 1</fullName>
        <ecNumber evidence="32">3.4.-.-</ecNumber>
    </recommendedName>
    <component>
        <recommendedName>
            <fullName evidence="30">NACHT, LRR and PYD domains-containing protein 1b, C-terminus</fullName>
            <shortName evidence="30">Nlrp1b1-CT</shortName>
        </recommendedName>
    </component>
    <component>
        <recommendedName>
            <fullName evidence="30">NACHT, LRR and PYD domains-containing protein 1b, N-terminus</fullName>
            <shortName evidence="30">Nlrp1b1-NT</shortName>
        </recommendedName>
    </component>
</protein>
<feature type="chain" id="PRO_0000435103" description="NACHT, LRR and PYD domains-containing protein 1b allele 1">
    <location>
        <begin position="1"/>
        <end position="1233"/>
    </location>
</feature>
<feature type="chain" id="PRO_0000452855" description="NACHT, LRR and PYD domains-containing protein 1b, N-terminus" evidence="32">
    <location>
        <begin position="1"/>
        <end position="983"/>
    </location>
</feature>
<feature type="chain" id="PRO_0000452856" description="NACHT, LRR and PYD domains-containing protein 1b, C-terminus" evidence="32">
    <location>
        <begin position="984"/>
        <end position="1233"/>
    </location>
</feature>
<feature type="domain" description="NACHT" evidence="3">
    <location>
        <begin position="126"/>
        <end position="435"/>
    </location>
</feature>
<feature type="repeat" description="LRR 1">
    <location>
        <begin position="627"/>
        <end position="647"/>
    </location>
</feature>
<feature type="repeat" description="LRR 2">
    <location>
        <begin position="684"/>
        <end position="704"/>
    </location>
</feature>
<feature type="domain" description="FIIND" evidence="4">
    <location>
        <begin position="850"/>
        <end position="1133"/>
    </location>
</feature>
<feature type="domain" description="CARD" evidence="2">
    <location>
        <begin position="1143"/>
        <end position="1226"/>
    </location>
</feature>
<feature type="region of interest" description="Disordered" evidence="5">
    <location>
        <begin position="1"/>
        <end position="22"/>
    </location>
</feature>
<feature type="region of interest" description="ZU5" evidence="1">
    <location>
        <begin position="850"/>
        <end position="983"/>
    </location>
</feature>
<feature type="region of interest" description="UPA" evidence="1">
    <location>
        <begin position="984"/>
        <end position="1133"/>
    </location>
</feature>
<feature type="binding site" evidence="3">
    <location>
        <begin position="132"/>
        <end position="139"/>
    </location>
    <ligand>
        <name>ATP</name>
        <dbReference type="ChEBI" id="CHEBI:30616"/>
    </ligand>
</feature>
<feature type="site" description="(Microbial infection) Probable cleavage; by anthrax lethal toxin (LT) endopeptidase component" evidence="32">
    <location>
        <begin position="44"/>
        <end position="45"/>
    </location>
</feature>
<feature type="site" description="Trigger for autolytic processing" evidence="1">
    <location>
        <position position="957"/>
    </location>
</feature>
<feature type="site" description="Cleavage; by autolysis" evidence="4 17">
    <location>
        <begin position="983"/>
        <end position="984"/>
    </location>
</feature>
<feature type="mutagenesis site" description="Low spontaneous IL1B release and loss of activation by LT. Increased IL1B release in response to metabolic inhibitors." evidence="20">
    <location>
        <begin position="1"/>
        <end position="50"/>
    </location>
</feature>
<feature type="mutagenesis site" description="Low spontaneous IL1B release and loss of activation by LT. No effect on activation by metabolic inhibitors." evidence="20">
    <location>
        <begin position="1"/>
        <end position="44"/>
    </location>
</feature>
<feature type="mutagenesis site" description="No effect on IL1B release." evidence="20">
    <location>
        <begin position="1"/>
        <end position="40"/>
    </location>
</feature>
<feature type="mutagenesis site" description="No effect on cleavage by LT, nor on IL1B processing. No effect on cleavage by LT, nor on IL1B processing; when associated with 38-A-A-39." evidence="17">
    <original>KHR</original>
    <variation>AAA</variation>
    <location>
        <begin position="34"/>
        <end position="36"/>
    </location>
</feature>
<feature type="mutagenesis site" description="No effect on cleavage by LT." evidence="17">
    <original>PKL</original>
    <variation>QAQ</variation>
    <location>
        <begin position="37"/>
        <end position="39"/>
    </location>
</feature>
<feature type="mutagenesis site" description="No effect on cleavage by LT, nor on IL1B processing." evidence="17">
    <original>KL</original>
    <variation>AA</variation>
    <location>
        <begin position="38"/>
        <end position="39"/>
    </location>
</feature>
<feature type="mutagenesis site" description="Loss of cleavage by LT and of LT-induced IL1B processing and suppression of LT-induced pyroptosis in macrophages, no effect on IL1B release in response to metabolic inhibitors; when associated with A-44 and Q-45." evidence="17 20">
    <original>L</original>
    <variation>Q</variation>
    <location>
        <position position="43"/>
    </location>
</feature>
<feature type="mutagenesis site" description="Partial loss of cleavage by LT and of LT-induced IL1B processing. Loss of cleavage by LT and of LT-induced IL1B processing; when associated with Q-43 and Q-45. No effect on IL1B release in response to metabolic inhibitors; when associated with Q-43 and Q-45." evidence="17 20">
    <original>K</original>
    <variation>A</variation>
    <location>
        <position position="44"/>
    </location>
</feature>
<feature type="mutagenesis site" description="Loss of cleavage by LT and of LT-induced IL1B processing. Loss of cleavage by LT and of LT-induced IL1B processing; when associated with Q-43 and A-44. No effect on IL1B release in response to metabolic inhibitors; when associated with Q-43 and A-44." evidence="17 20">
    <original>L</original>
    <variation>Q</variation>
    <location>
        <position position="45"/>
    </location>
</feature>
<feature type="mutagenesis site" description="Constitutive IL1B release." evidence="15">
    <original>GKS</original>
    <variation>AAA</variation>
    <location>
        <begin position="137"/>
        <end position="139"/>
    </location>
</feature>
<feature type="mutagenesis site" description="Constitutive IL1B processing." evidence="17">
    <location>
        <begin position="626"/>
        <end position="719"/>
    </location>
</feature>
<feature type="mutagenesis site" description="Increased IL1B release under basal conditions. No effect on IL1B release in response to LT or metabolic inhibitors." evidence="20">
    <original>E</original>
    <variation>A</variation>
    <location>
        <position position="629"/>
    </location>
</feature>
<feature type="mutagenesis site" description="Spontaneous IL1B release under basal conditions, loss of response to metabolic inhibitors and to LT; when associated with A-634." evidence="20">
    <original>D</original>
    <variation>A</variation>
    <location>
        <position position="632"/>
    </location>
</feature>
<feature type="mutagenesis site" description="Spontaneous IL1B release under basal conditions, loss of response to metabolic inhibitors and to LT; when associated with A-632." evidence="20">
    <original>S</original>
    <variation>A</variation>
    <location>
        <position position="634"/>
    </location>
</feature>
<feature type="mutagenesis site" description="No effect on IL1B release under basal conditions, nor in response to LT or metabolic inhibitors." evidence="20">
    <original>Q</original>
    <variation>A</variation>
    <location>
        <position position="644"/>
    </location>
</feature>
<feature type="mutagenesis site" description="No effect on IL1B release under basal conditions, nor in response to LT or metabolic inhibitors." evidence="20">
    <original>N</original>
    <variation>A</variation>
    <location>
        <position position="648"/>
    </location>
</feature>
<feature type="mutagenesis site" description="No effect on IL1B release under basal conditions, nor in response to LT or metabolic inhibitors." evidence="20">
    <original>R</original>
    <variation>A</variation>
    <location>
        <position position="651"/>
    </location>
</feature>
<feature type="mutagenesis site" description="Spontaneous IL1B release under basal conditions, loss of response to metabolic inhibitors and to LT; when associated with A-659." evidence="20">
    <original>K</original>
    <variation>A</variation>
    <location>
        <position position="658"/>
    </location>
</feature>
<feature type="mutagenesis site" description="Spontaneous IL1B release under basal conditions, loss of response to metabolic inhibitors and to LT; when associated with A-658." evidence="20">
    <original>T</original>
    <variation>A</variation>
    <location>
        <position position="659"/>
    </location>
</feature>
<feature type="mutagenesis site" description="No effect on IL1B release under basal conditions, nor in response to LT or metabolic inhibitors." evidence="20">
    <original>W</original>
    <variation>A</variation>
    <location>
        <position position="661"/>
    </location>
</feature>
<feature type="mutagenesis site" description="Spontaneous IL1B release under basal conditions, loss of response to metabolic inhibitors, no effect on the response to LT; when associated with A-664." evidence="20">
    <original>V</original>
    <variation>A</variation>
    <location>
        <position position="663"/>
    </location>
</feature>
<feature type="mutagenesis site" description="Spontaneous IL1B release under basal conditions, loss of response to metabolic inhibitors, no effect on the response to LT; when associated with A-663." evidence="20">
    <original>K</original>
    <variation>A</variation>
    <location>
        <position position="664"/>
    </location>
</feature>
<feature type="mutagenesis site" description="No effect on IL1B release under basal conditions, nor in response to LT or metabolic inhibitors." evidence="20">
    <original>R</original>
    <variation>A</variation>
    <location>
        <position position="670"/>
    </location>
</feature>
<feature type="mutagenesis site" description="No effect on IL1B release under basal conditions, nor in response to LT or metabolic inhibitors." evidence="20">
    <original>S</original>
    <variation>A</variation>
    <location>
        <position position="673"/>
    </location>
</feature>
<feature type="mutagenesis site" description="Spontaneous IL1B release under basal conditions, no effect on the response to metabolic inhibitors, partial loss of response to LT; when associated with A-687." evidence="20">
    <original>T</original>
    <variation>A</variation>
    <location>
        <position position="686"/>
    </location>
</feature>
<feature type="mutagenesis site" description="Spontaneous IL1B release under basal conditions, no effect on the response to metabolic inhibitors, partial loss of response to LT; when associated with A-686." evidence="20">
    <original>E</original>
    <variation>A</variation>
    <location>
        <position position="687"/>
    </location>
</feature>
<feature type="mutagenesis site" description="No effect on IL1B release under basal conditions, nor in response to LT or metabolic inhibitors." evidence="20">
    <original>Y</original>
    <variation>A</variation>
    <location>
        <position position="689"/>
    </location>
</feature>
<feature type="mutagenesis site" description="Low spontaneous IL1B release, no effect on the response to metabolic inhibitors, nor to LT." evidence="20">
    <original>Q</original>
    <variation>A</variation>
    <location>
        <position position="691"/>
    </location>
</feature>
<feature type="mutagenesis site" description="No effect on IL1B release under basal conditions, nor in response to LT or metabolic inhibitors; when associated with A-701 and A-702." evidence="20">
    <original>D</original>
    <variation>A</variation>
    <location>
        <position position="698"/>
    </location>
</feature>
<feature type="mutagenesis site" description="No effect on IL1B release under basal conditions, nor in response to LT or metabolic inhibitors; when associated with A-698 and A-702." evidence="20">
    <original>R</original>
    <variation>A</variation>
    <location>
        <position position="701"/>
    </location>
</feature>
<feature type="mutagenesis site" description="No effect on IL1B release under basal conditions, nor in response to LT or metabolic inhibitors; when associated with A-698 and A-701." evidence="20">
    <original>M</original>
    <variation>A</variation>
    <location>
        <position position="702"/>
    </location>
</feature>
<feature type="mutagenesis site" description="No effect on IL1B release under basal conditions, nor in response to LT or metabolic inhibitors." evidence="20">
    <original>E</original>
    <variation>A</variation>
    <location>
        <position position="705"/>
    </location>
</feature>
<feature type="mutagenesis site" description="Spontaneous IL1B release under basal conditions, loss of response to metabolic inhibitors and to LT." evidence="20">
    <original>D</original>
    <variation>A</variation>
    <location>
        <position position="720"/>
    </location>
</feature>
<feature type="mutagenesis site" description="No effect on IL1B release under basal conditions, nor in response to LT or metabolic inhibitors." evidence="20">
    <original>Q</original>
    <variation>A</variation>
    <location>
        <position position="727"/>
    </location>
</feature>
<feature type="mutagenesis site" description="Increased IL1B release under basal conditions. No effect on IL1B release in response to LT or metabolic inhibitors." evidence="20">
    <original>E</original>
    <variation>A</variation>
    <location>
        <position position="731"/>
    </location>
</feature>
<feature type="mutagenesis site" description="No effect on IL1B release under basal conditions, nor in response to LT or metabolic inhibitors; when associated with A-738." evidence="20">
    <original>T</original>
    <variation>A</variation>
    <location>
        <position position="734"/>
    </location>
</feature>
<feature type="mutagenesis site" description="No effect on IL1B release under basal conditions, nor in response to LT or metabolic inhibitors; when associated with A-734." evidence="20">
    <original>K</original>
    <variation>A</variation>
    <location>
        <position position="738"/>
    </location>
</feature>
<feature type="mutagenesis site" description="Spontaneous IL1B release under basal conditions, loss of response to metabolic inhibitors and to LT; when associated with A-746." evidence="20">
    <original>I</original>
    <variation>A</variation>
    <location>
        <position position="744"/>
    </location>
</feature>
<feature type="mutagenesis site" description="Spontaneous IL1B release under basal conditions, loss of response to metabolic inhibitors and to LT; when associated with A-744." evidence="20">
    <original>S</original>
    <variation>A</variation>
    <location>
        <position position="746"/>
    </location>
</feature>
<feature type="mutagenesis site" description="No effect on response to LT, attenuated response to metabolic inhibitors." evidence="20">
    <location>
        <begin position="749"/>
        <end position="809"/>
    </location>
</feature>
<feature type="mutagenesis site" description="No effect on response to LT, attenuated response to metabolic inhibitors." evidence="20">
    <location>
        <begin position="810"/>
        <end position="870"/>
    </location>
</feature>
<feature type="mutagenesis site" description="Loss of autocatalytic cleavage within the FIIND region, abolishing the ability to activate the inflammasome. Abolished interaction with DPP9. No effect on cleavage by LT." evidence="17 21 26">
    <original>S</original>
    <variation>A</variation>
    <location>
        <position position="984"/>
    </location>
</feature>
<feature type="mutagenesis site" description="Loss of autocatalytic cleavage within the FIIND region and of IL1B release, decrease in CASP1-binding. No effect on homomerization." evidence="12">
    <original>V</original>
    <variation>D</variation>
    <location>
        <position position="988"/>
    </location>
</feature>
<feature type="mutagenesis site" description="Strong decrease of IL1B release, but no effect on autocatalytic cleavage within the FIIND region." evidence="12">
    <original>A</original>
    <variation>D</variation>
    <location>
        <position position="996"/>
    </location>
</feature>
<feature type="mutagenesis site" description="No effect on autocatalytic cleavage within the FIIND region." evidence="12">
    <original>V</original>
    <variation>L</variation>
    <location>
        <position position="1012"/>
    </location>
</feature>
<feature type="mutagenesis site" description="No effect on autocatalytic cleavage within the FIIND region." evidence="12">
    <original>Q</original>
    <variation>L</variation>
    <location>
        <position position="1014"/>
    </location>
</feature>
<feature type="mutagenesis site" description="Decrease of IL1B release, but no effect on autocatalytic cleavage within the FIIND region." evidence="12">
    <original>N</original>
    <variation>S</variation>
    <location>
        <position position="1026"/>
    </location>
</feature>
<feature type="mutagenesis site" description="Loss of homomerization, of autocatalytic cleavage within the FIIND region and of IL1B release. No effect on CASP1-binding." evidence="12">
    <original>EIKLQIK</original>
    <variation>AAAAAAA</variation>
    <location>
        <begin position="1100"/>
        <end position="1106"/>
    </location>
</feature>
<feature type="mutagenesis site" description="No effect on autocatalytic cleavage within the FIIND region." evidence="12">
    <original>K</original>
    <variation>R</variation>
    <location>
        <position position="1112"/>
    </location>
</feature>
<sequence length="1233" mass="140688">MEESPPKQKSNTKVAQHEGQQDLNTTRHMNVELKHRPKLERHLKLGMIPVVYMKQGEEILYPAQSLREENLIQNFTSLLLLQKLCPKDPENMIRKSWASCVPEEGGHMINIQDLFGPNIGTQKEPQLVIIEGAAGIGKSTLARLVKRAWKEGQLYRDHFQHVFFFSCRELAQCKKLSLAELIAQGQEVPTAPINQILSHPEKLLFILDGIDEPAWVLADQNPELCLHWSQRQPVHTLLGSLLGKSILPEAFFLLTTRTTALQKFIPSLPMPCQVEVLGFSGIERENYFYKYFANQRHAITAFMMVESNPVLLTLCEVPWVCWLVCTCLKKQMEQGRVLSLKSQTTTALCLKYLSLTIPDKHRRTQVKALCSLAAEGIWKRRTLFSESDLCKQGLDEDAVATFLKTGVLQKQASSLSYSFAHLCLQEFFAAISCILEDSEERHGNMEMDRIVETLVERYGRQNLFEAPTVRFLFGLLGKEGVKGMEKLFSCSLHGKTNLKLLWHILVKSQPHQPPCLGLLHCLYENQDMELLTHVMHDLQGTIVPGPNDTAHTVLQTNVKHLVVQTDMELMVATFCIQFYCHVRTLQLNMEKQQGYALISPRMVLYRWTPITNASWEILFYNLKFTRNLEGLDLSGNSLRYSVVQSLCNTLRYPGCQLKTLWLVKCGLTSRYCSLLASVLSAHSSLTELYLQLNDLGDDGVRMLCEGLRNPVCNLSILWLDLSSLSAQVITELRTLEEKNPKLYIRSIWMPHMMVPTENMDEEAILTTLKQQRQESGDKPMEILGTEEDFWGPTGPVATELVDRVRNLYRMPQMMVPTENMDEEDILTSFKQQRQQSGANPMEILGTEEDFWGPIGPVATEVVYRERNLYRVQLPMAGSYHCPSTRLHFVVTRAVTIEIEFCAWSQFLDKTPLQQSHMVVGPLFDIKAEQGAVTAVYLPHFVSLKDTKASTFDFKVAHFQEHGMVLETPDRVKPGYTVLKNPSFSPMGVVLRIIPAARHFIPITSITLIYYRVNQEEVTLHLYLVPNDCTIQKAIDDEEMKFQFVRINKPPPVDNLFIGSRYIVSGSENLEITPKELELCYRSSKEFQLFSEIYVGNMGSEIKLQIKNKKHMKLIWEALLKPGDLRPALPRIAQALKDAPSLLHFMDQHREQLVARVTSVDPLLDKLHGLVLNEESYEAVRAENTNQDKMRKLFNLSRSWSRACKDLFYQALKETHPHLVMDLLEKSGGVSLGS</sequence>
<organism>
    <name type="scientific">Mus musculus</name>
    <name type="common">Mouse</name>
    <dbReference type="NCBI Taxonomy" id="10090"/>
    <lineage>
        <taxon>Eukaryota</taxon>
        <taxon>Metazoa</taxon>
        <taxon>Chordata</taxon>
        <taxon>Craniata</taxon>
        <taxon>Vertebrata</taxon>
        <taxon>Euteleostomi</taxon>
        <taxon>Mammalia</taxon>
        <taxon>Eutheria</taxon>
        <taxon>Euarchontoglires</taxon>
        <taxon>Glires</taxon>
        <taxon>Rodentia</taxon>
        <taxon>Myomorpha</taxon>
        <taxon>Muroidea</taxon>
        <taxon>Muridae</taxon>
        <taxon>Murinae</taxon>
        <taxon>Mus</taxon>
        <taxon>Mus</taxon>
    </lineage>
</organism>
<evidence type="ECO:0000250" key="1">
    <source>
        <dbReference type="UniProtKB" id="Q9C000"/>
    </source>
</evidence>
<evidence type="ECO:0000255" key="2">
    <source>
        <dbReference type="PROSITE-ProRule" id="PRU00046"/>
    </source>
</evidence>
<evidence type="ECO:0000255" key="3">
    <source>
        <dbReference type="PROSITE-ProRule" id="PRU00136"/>
    </source>
</evidence>
<evidence type="ECO:0000255" key="4">
    <source>
        <dbReference type="PROSITE-ProRule" id="PRU01174"/>
    </source>
</evidence>
<evidence type="ECO:0000256" key="5">
    <source>
        <dbReference type="SAM" id="MobiDB-lite"/>
    </source>
</evidence>
<evidence type="ECO:0000269" key="6">
    <source>
    </source>
</evidence>
<evidence type="ECO:0000269" key="7">
    <source>
    </source>
</evidence>
<evidence type="ECO:0000269" key="8">
    <source>
    </source>
</evidence>
<evidence type="ECO:0000269" key="9">
    <source>
    </source>
</evidence>
<evidence type="ECO:0000269" key="10">
    <source>
    </source>
</evidence>
<evidence type="ECO:0000269" key="11">
    <source>
    </source>
</evidence>
<evidence type="ECO:0000269" key="12">
    <source>
    </source>
</evidence>
<evidence type="ECO:0000269" key="13">
    <source>
    </source>
</evidence>
<evidence type="ECO:0000269" key="14">
    <source>
    </source>
</evidence>
<evidence type="ECO:0000269" key="15">
    <source>
    </source>
</evidence>
<evidence type="ECO:0000269" key="16">
    <source>
    </source>
</evidence>
<evidence type="ECO:0000269" key="17">
    <source>
    </source>
</evidence>
<evidence type="ECO:0000269" key="18">
    <source>
    </source>
</evidence>
<evidence type="ECO:0000269" key="19">
    <source>
    </source>
</evidence>
<evidence type="ECO:0000269" key="20">
    <source>
    </source>
</evidence>
<evidence type="ECO:0000269" key="21">
    <source>
    </source>
</evidence>
<evidence type="ECO:0000269" key="22">
    <source>
    </source>
</evidence>
<evidence type="ECO:0000269" key="23">
    <source>
    </source>
</evidence>
<evidence type="ECO:0000269" key="24">
    <source>
    </source>
</evidence>
<evidence type="ECO:0000269" key="25">
    <source>
    </source>
</evidence>
<evidence type="ECO:0000269" key="26">
    <source>
    </source>
</evidence>
<evidence type="ECO:0000269" key="27">
    <source>
    </source>
</evidence>
<evidence type="ECO:0000303" key="28">
    <source>
    </source>
</evidence>
<evidence type="ECO:0000303" key="29">
    <source>
    </source>
</evidence>
<evidence type="ECO:0000305" key="30"/>
<evidence type="ECO:0000305" key="31">
    <source>
    </source>
</evidence>
<evidence type="ECO:0000305" key="32">
    <source>
    </source>
</evidence>
<accession>Q2LKW6</accession>
<reference key="1">
    <citation type="journal article" date="2006" name="Nat. Genet.">
        <title>Nalp1b controls mouse macrophage susceptibility to anthrax lethal toxin.</title>
        <authorList>
            <person name="Boyden E.D."/>
            <person name="Dietrich W.F."/>
        </authorList>
    </citation>
    <scope>NUCLEOTIDE SEQUENCE [MRNA]</scope>
    <scope>FUNCTION</scope>
    <scope>TISSUE SPECIFICITY</scope>
    <source>
        <strain>129S1/SvImJ</strain>
        <strain>BALB/cJ</strain>
        <strain>C3H/HeJ</strain>
        <strain>CBA/J</strain>
        <strain>FVB/NJ</strain>
        <strain>NON/ShiLtJ</strain>
        <strain>NZO</strain>
        <strain>SWR/J</strain>
    </source>
</reference>
<reference key="2">
    <citation type="journal article" date="2009" name="Infect. Immun.">
        <title>Anthrax lethal toxin triggers the formation of a membrane-associated inflammasome complex in murine macrophages.</title>
        <authorList>
            <person name="Nour A.M."/>
            <person name="Yeung Y.G."/>
            <person name="Santambrogio L."/>
            <person name="Boyden E.D."/>
            <person name="Stanley E.R."/>
            <person name="Brojatsch J."/>
        </authorList>
    </citation>
    <scope>SUBCELLULAR LOCATION</scope>
    <scope>ACTIVITY REGULATION</scope>
    <scope>ACTIVATION BY ANTHRAX LETHAL TOXIN</scope>
    <scope>INFLAMMASOME ASSEMBLY</scope>
</reference>
<reference key="3">
    <citation type="journal article" date="2009" name="Infect. Immun.">
        <title>Expression of Nlrp1b inflammasome components in human fibroblasts confers susceptibility to anthrax lethal toxin.</title>
        <authorList>
            <person name="Liao K.C."/>
            <person name="Mogridge J."/>
        </authorList>
    </citation>
    <scope>FUNCTION</scope>
    <scope>INTERACTION WITH CASP1</scope>
    <scope>ACTIVITY REGULATION</scope>
    <scope>HOMOMERIZATION</scope>
    <scope>ACTIVATION BY ANTHRAX LETHAL TOXIN</scope>
    <scope>DOMAIN</scope>
</reference>
<reference key="4">
    <citation type="journal article" date="2009" name="Nature">
        <title>T cells dampen innate immune responses through inhibition of NLRP1 and NLRP3 inflammasomes.</title>
        <authorList>
            <person name="Guarda G."/>
            <person name="Dostert C."/>
            <person name="Staehli F."/>
            <person name="Cabalzar K."/>
            <person name="Castillo R."/>
            <person name="Tardivel A."/>
            <person name="Schneider P."/>
            <person name="Tschopp J."/>
        </authorList>
    </citation>
    <scope>INHIBITION OF INFLAMMASOME RESPONSE</scope>
</reference>
<reference key="5">
    <citation type="journal article" date="2010" name="J. Immunol.">
        <title>Resistance to Bacillus anthracis infection mediated by a lethal toxin sensitive allele of Nalp1b/Nlrp1b.</title>
        <authorList>
            <person name="Terra J.K."/>
            <person name="Cote C.K."/>
            <person name="France B."/>
            <person name="Jenkins A.L."/>
            <person name="Bozue J.A."/>
            <person name="Welkos S.L."/>
            <person name="LeVine S.M."/>
            <person name="Bradley K.A."/>
        </authorList>
    </citation>
    <scope>FUNCTION</scope>
    <scope>ACTIVITY REGULATION</scope>
    <scope>ACTIVATION BY ANTHRAX LETHAL TOXIN</scope>
</reference>
<reference key="6">
    <citation type="journal article" date="2010" name="PLoS Pathog.">
        <title>Inflammasome sensor Nlrp1b-dependent resistance to anthrax is mediated by caspase-1, IL-1 signaling and neutrophil recruitment.</title>
        <authorList>
            <person name="Moayeri M."/>
            <person name="Crown D."/>
            <person name="Newman Z.L."/>
            <person name="Okugawa S."/>
            <person name="Eckhaus M."/>
            <person name="Cataisson C."/>
            <person name="Liu S."/>
            <person name="Sastalla I."/>
            <person name="Leppla S.H."/>
        </authorList>
    </citation>
    <scope>FUNCTION</scope>
    <scope>ACTIVATION BY ANTHRAX LETHAL TOXIN</scope>
    <scope>POLYMORPHISM</scope>
</reference>
<reference key="7">
    <citation type="journal article" date="2012" name="J. Immunol.">
        <title>NLRP1-dependent pyroptosis leads to acute lung injury and morbidity in mice.</title>
        <authorList>
            <person name="Kovarova M."/>
            <person name="Hesker P.R."/>
            <person name="Jania L."/>
            <person name="Nguyen M."/>
            <person name="Snouwaert J.N."/>
            <person name="Xiang Z."/>
            <person name="Lommatzsch S.E."/>
            <person name="Huang M.T."/>
            <person name="Ting J.P."/>
            <person name="Koller B.H."/>
        </authorList>
    </citation>
    <scope>FUNCTION</scope>
    <scope>ACTIVITY REGULATION</scope>
    <scope>DISRUPTION PHENOTYPE</scope>
</reference>
<reference key="8">
    <citation type="journal article" date="2012" name="Nature">
        <title>Novel role of PKR in inflammasome activation and HMGB1 release.</title>
        <authorList>
            <person name="Lu B."/>
            <person name="Nakamura T."/>
            <person name="Inouye K."/>
            <person name="Li J."/>
            <person name="Tang Y."/>
            <person name="Lundbaeck P."/>
            <person name="Valdes-Ferrer S.I."/>
            <person name="Olofsson P.S."/>
            <person name="Kalb T."/>
            <person name="Roth J."/>
            <person name="Zou Y."/>
            <person name="Erlandsson-Harris H."/>
            <person name="Yang H."/>
            <person name="Ting J.P."/>
            <person name="Wang H."/>
            <person name="Andersson U."/>
            <person name="Antoine D.J."/>
            <person name="Chavan S.S."/>
            <person name="Hotamisligil G.S."/>
            <person name="Tracey K.J."/>
        </authorList>
    </citation>
    <scope>FUNCTION</scope>
    <scope>INTERACTION WITH EIF2AK2</scope>
</reference>
<reference key="9">
    <citation type="journal article" date="2012" name="PLoS Pathog.">
        <title>Proteolytic processing of Nlrp1b is required for inflammasome activity.</title>
        <authorList>
            <person name="Frew B.C."/>
            <person name="Joag V.R."/>
            <person name="Mogridge J."/>
        </authorList>
    </citation>
    <scope>FUNCTION</scope>
    <scope>ACTIVITY REGULATION</scope>
    <scope>HOMOMERIZATION</scope>
    <scope>SUBUNIT</scope>
    <scope>AUTOCATALYTIC CLEAVAGE</scope>
    <scope>MUTAGENESIS OF VAL-988; ALA-996; VAL-1012; GLN-1014; ASN-1026; 1100-GLU--LYS-1106 AND LYS-1112</scope>
</reference>
<reference key="10">
    <citation type="journal article" date="2013" name="BMC Genomics">
        <title>Transcriptional analysis of the three Nlrp1 paralogs in mice.</title>
        <authorList>
            <person name="Sastalla I."/>
            <person name="Crown D."/>
            <person name="Masters S.L."/>
            <person name="McKenzie A."/>
            <person name="Leppla S.H."/>
            <person name="Moayeri M."/>
        </authorList>
    </citation>
    <scope>TISSUE SPECIFICITY</scope>
</reference>
<reference key="11">
    <citation type="journal article" date="2013" name="Infect. Immun.">
        <title>Activation of the Nlrp1b inflammasome by reduction of cytosolic ATP.</title>
        <authorList>
            <person name="Liao K.C."/>
            <person name="Mogridge J."/>
        </authorList>
    </citation>
    <scope>ACTIVITY REGULATION</scope>
    <scope>ACTIVATION BY ANTHRAX LETHAL TOXIN</scope>
    <scope>MUTAGENESIS OF 137-GLY--SER-139</scope>
</reference>
<reference key="12">
    <citation type="journal article" date="2013" name="PLoS Pathog.">
        <title>Direct proteolytic cleavage of NLRP1B is necessary and sufficient for inflammasome activation by anthrax lethal factor.</title>
        <authorList>
            <person name="Chavarria-Smith J."/>
            <person name="Vance R.E."/>
        </authorList>
    </citation>
    <scope>FUNCTION</scope>
    <scope>ACTIVITY REGULATION</scope>
    <scope>CLEAVAGE BY ANTHRAX LETHAL TOXIN</scope>
    <scope>AUTOCATALYTIC CLEAVAGE</scope>
    <scope>MUTAGENESIS OF 34-LYS--ARG-36; 37-PRO--LEU-39; 38-LYS-LEU-39; LEU-43; LYS-44; LEU-45; 626-ARG--LEU-719 AND SER-984</scope>
</reference>
<reference key="13">
    <citation type="journal article" date="2014" name="Infect. Immun.">
        <title>NLRP1 is an inflammasome sensor for Toxoplasma gondii.</title>
        <authorList>
            <person name="Ewald S.E."/>
            <person name="Chavarria-Smith J."/>
            <person name="Boothroyd J.C."/>
        </authorList>
    </citation>
    <scope>ACTIVITY REGULATION</scope>
    <scope>ACTIVATION BY TOXOPLASMA GONDII</scope>
</reference>
<reference key="14">
    <citation type="journal article" date="2014" name="Infect. Immun.">
        <title>Distinct regions of NLRP1B are required to respond to anthrax lethal toxin and metabolic inhibition.</title>
        <authorList>
            <person name="Neiman-Zenevich J."/>
            <person name="Liao K.C."/>
            <person name="Mogridge J."/>
        </authorList>
    </citation>
    <scope>ACTIVITY REGULATION</scope>
    <scope>ACTIVATION BY ANTHRAX LETHAL TOXIN</scope>
    <scope>MUTAGENESIS OF 1-MET--GLU-40; 1-MET--LYS-44; 1-MET--VAL-50; 43-LEU--LEU-45; GLU-629; ASP-632; SER-634; GLN-644; ASN-648; ARG-651; LYS-658; THR-659; TRP-661; VAL-663; LYS-664; ARG-670; SER-673; THR-686; GLU-687; TYR-689; GLN-691; ASP-698; ARG-701; MET-702; GLU-705; ASP-720; GLN-727; GLU-731; THR-734; LYS-738; ILE-744; SER-746; 749-MET--ARG-809 AND 810-MET--ARG-870</scope>
    <scope>DOMAIN</scope>
</reference>
<reference key="15">
    <citation type="journal article" date="2014" name="Nat. Commun.">
        <title>Activation of the NLRP1b inflammasome independently of ASC-mediated caspase-1 autoproteolysis and speck formation.</title>
        <authorList>
            <person name="Van Opdenbosch N."/>
            <person name="Gurung P."/>
            <person name="Vande Walle L."/>
            <person name="Fossoul A."/>
            <person name="Kanneganti T.D."/>
            <person name="Lamkanfi M."/>
        </authorList>
    </citation>
    <scope>FUNCTION</scope>
    <scope>ACTIVITY REGULATION</scope>
    <scope>ACTIVATION BY ANTHRAX LETHAL TOXIN</scope>
    <scope>INFLAMMASOME ASSEMBLY</scope>
    <scope>SUBCELLULAR LOCATION</scope>
</reference>
<reference key="16">
    <citation type="journal article" date="2018" name="Cell Chem. Biol.">
        <title>Inhibition of Dpp8/9 activates the Nlrp1b inflammasome.</title>
        <authorList>
            <person name="Okondo M.C."/>
            <person name="Rao S.D."/>
            <person name="Taabazuing C.Y."/>
            <person name="Chui A.J."/>
            <person name="Poplawski S.E."/>
            <person name="Johnson D.C."/>
            <person name="Bachovchin D.A."/>
        </authorList>
    </citation>
    <scope>ACTIVITY REGULATION</scope>
    <scope>MUTAGENESIS OF SER-984</scope>
</reference>
<reference key="17">
    <citation type="journal article" date="2019" name="ACS Chem. Biol.">
        <title>DPP9's enzymatic activity and not its binding to CARD8 inhibits inflammasome activation.</title>
        <authorList>
            <person name="Griswold A.R."/>
            <person name="Ball D.P."/>
            <person name="Bhattacharjee A."/>
            <person name="Chui A.J."/>
            <person name="Rao S.D."/>
            <person name="Taabazuing C.Y."/>
            <person name="Bachovchin D.A."/>
        </authorList>
    </citation>
    <scope>INTERACTION WITH DPP8 AND DPP9</scope>
    <scope>ACTIVITY REGULATION</scope>
    <scope>MUTAGENESIS OF SER-984</scope>
</reference>
<reference key="18">
    <citation type="journal article" date="2019" name="Cell Death Dis.">
        <title>DPP8/9 inhibitors are universal activators of functional NLRP1 alleles.</title>
        <authorList>
            <person name="Gai K."/>
            <person name="Okondo M.C."/>
            <person name="Rao S.D."/>
            <person name="Chui A.J."/>
            <person name="Ball D.P."/>
            <person name="Johnson D.C."/>
            <person name="Bachovchin D.A."/>
        </authorList>
    </citation>
    <scope>ACTIVITY REGULATION</scope>
</reference>
<reference key="19">
    <citation type="journal article" date="2019" name="EMBO J.">
        <title>The N-end rule ubiquitin ligase UBR2 mediates NLRP1B inflammasome activation by anthrax lethal toxin.</title>
        <authorList>
            <person name="Xu H."/>
            <person name="Shi J."/>
            <person name="Gao H."/>
            <person name="Liu Y."/>
            <person name="Yang Z."/>
            <person name="Shao F."/>
            <person name="Dong N."/>
        </authorList>
    </citation>
    <scope>FUNCTION</scope>
    <scope>UBIQUITINATION (NACHT</scope>
    <scope>LRR AND PYD DOMAINS-CONTAINING PROTEIN 1B</scope>
    <scope>N-TERMINUS)</scope>
    <scope>ACTIVITY REGULATION</scope>
</reference>
<reference key="20">
    <citation type="journal article" date="2019" name="Science">
        <title>Functional degradation: A mechanism of NLRP1 inflammasome activation by diverse pathogen enzymes.</title>
        <authorList>
            <person name="Sandstrom A."/>
            <person name="Mitchell P.S."/>
            <person name="Goers L."/>
            <person name="Mu E.W."/>
            <person name="Lesser C.F."/>
            <person name="Vance R.E."/>
        </authorList>
    </citation>
    <scope>FUNCTION</scope>
    <scope>UBIQUITINATION (NACHT</scope>
    <scope>LRR AND PYD DOMAINS-CONTAINING PROTEIN 1B</scope>
    <scope>N-TERMINUS)</scope>
    <scope>ACTIVITY REGULATION</scope>
    <scope>SUBCELLULAR LOCATION</scope>
</reference>
<reference key="21">
    <citation type="journal article" date="2019" name="Science">
        <title>N-terminal degradation activates the NLRP1B inflammasome.</title>
        <authorList>
            <person name="Chui A.J."/>
            <person name="Okondo M.C."/>
            <person name="Rao S.D."/>
            <person name="Gai K."/>
            <person name="Griswold A.R."/>
            <person name="Johnson D.C."/>
            <person name="Ball D.P."/>
            <person name="Taabazuing C.Y."/>
            <person name="Orth E.L."/>
            <person name="Vittimberga B.A."/>
            <person name="Bachovchin D.A."/>
        </authorList>
    </citation>
    <scope>FUNCTION</scope>
    <scope>UBIQUITINATION (NACHT</scope>
    <scope>LRR AND PYD DOMAINS-CONTAINING PROTEIN 1B</scope>
    <scope>N-TERMINUS)</scope>
    <scope>ACTIVITY REGULATION</scope>
</reference>
<reference key="22">
    <citation type="journal article" date="2020" name="Immunol. Rev.">
        <title>The NLRP1 and CARD8 inflammasomes.</title>
        <authorList>
            <person name="Taabazuing C.Y."/>
            <person name="Griswold A.R."/>
            <person name="Bachovchin D.A."/>
        </authorList>
    </citation>
    <scope>REVIEW</scope>
</reference>
<reference key="23">
    <citation type="journal article" date="2020" name="Science">
        <title>Human NLRP1 is a sensor for double-stranded RNA.</title>
        <authorList>
            <person name="Bauernfried S."/>
            <person name="Scherr M.J."/>
            <person name="Pichlmair A."/>
            <person name="Duderstadt K.E."/>
            <person name="Hornung V."/>
        </authorList>
    </citation>
    <scope>FUNCTION</scope>
    <scope>ACTIVITY REGULATION</scope>
</reference>
<keyword id="KW-0067">ATP-binding</keyword>
<keyword id="KW-0963">Cytoplasm</keyword>
<keyword id="KW-0378">Hydrolase</keyword>
<keyword id="KW-0391">Immunity</keyword>
<keyword id="KW-1271">Inflammasome</keyword>
<keyword id="KW-0395">Inflammatory response</keyword>
<keyword id="KW-0399">Innate immunity</keyword>
<keyword id="KW-0433">Leucine-rich repeat</keyword>
<keyword id="KW-0472">Membrane</keyword>
<keyword id="KW-1210">Necrosis</keyword>
<keyword id="KW-0547">Nucleotide-binding</keyword>
<keyword id="KW-0645">Protease</keyword>
<keyword id="KW-0677">Repeat</keyword>
<keyword id="KW-0832">Ubl conjugation</keyword>
<comment type="function">
    <text evidence="1 6 9 10 11 12 13 14 17 22 23 24">Acts as the sensor component of the Nlrp1b inflammasome, which mediates inflammasome activation in response to various pathogen-associated signals, leading to subsequent pyroptosis (PubMed:19651869, PubMed:21170303, PubMed:22536155, PubMed:22753929, PubMed:23818853). Inflammasomes are supramolecular complexes that assemble in the cytosol in response to pathogens and other damage-associated signals and play critical roles in innate immunity and inflammation (PubMed:19651869, PubMed:21170303, PubMed:22536155, PubMed:22753929, PubMed:23818853, PubMed:30872531, PubMed:30872533, PubMed:31268597). Acts as a recognition receptor (PRR): recognizes specific pathogens and other damage-associated signals, such as B.anthracis lethal toxin (LT) or Val-boroPro inhibitor, and mediates the formation of the inflammasome polymeric complex (PubMed:30872531, PubMed:30872533, PubMed:31268597). In response to pathogen-associated signals, the N-terminal part of Nlrp1b is degraded by the proteasome, releasing the cleaved C-terminal part of the protein (NACHT, LRR and PYD domains-containing protein 1b, C-terminus), which polymerizes to initiate the formation of the inflammasome complex: the inflammasome directly recruits pro-caspase-1 (proCASP1) independently of PYCARD/ASC and promotes caspase-1 (CASP1) activation, which subsequently cleaves and activates inflammatory cytokines IL1B and IL18 and gasdermin-D (GSDMD), leading to pyroptosis (PubMed:16429160, PubMed:19949100, PubMed:22753929, PubMed:23818853, PubMed:30872531, PubMed:30872533, PubMed:31268597). In the absence of GSDMD expression, the Nlrp1b inflammasome is able to recruit and activate CASP8, leading to activation of gasdermin-E (GSDME) (By similarity). Activation of Nlrp1b inflammasome is also required for HMGB1 secretion; the active cytokines and HMGB1 stimulate inflammatory responses (PubMed:22801494). Primary mediator of macrophage susceptibility to B.anthracis LT: in response to B.anthracis infection, macrophages and dendritic cells release IL1B and undergo pyroptosis (PubMed:16429160, PubMed:19949100, PubMed:22753929, PubMed:23818853). This early inflammatory response to the toxin increases resistance to infection by B.anthracis spores (PubMed:16429160, PubMed:19949100, PubMed:22753929, PubMed:23818853).</text>
</comment>
<comment type="function">
    <molecule>NACHT, LRR and PYD domains-containing protein 1b allele 1</molecule>
    <text evidence="32">Constitutes the precursor of the Nlrp1b inflammasome, which mediates autoproteolytic processing within the FIIND domain to generate the N-terminal and C-terminal parts, which are associated non-covalently in absence of pathogens and other damage-associated signals.</text>
</comment>
<comment type="function">
    <molecule>NACHT, LRR and PYD domains-containing protein 1b, N-terminus</molecule>
    <text evidence="22 23">Regulatory part that prevents formation of the Nlrp1b inflammasome: in absence of pathogens and other damage-associated signals, interacts with the C-terminal part of Nlrp1b (NACHT, LRR and PYD domains-containing protein 1b, C-terminus), preventing activation of the Nlrp1b inflammasome (PubMed:30872531, PubMed:30872533). In response to pathogen-associated signals, this part is ubiquitinated by the N-end rule pathway and degraded by the proteasome, releasing the cleaved C-terminal part of the protein, which polymerizes and forms the Nlrp1b inflammasome (PubMed:30872531, PubMed:30872533).</text>
</comment>
<comment type="function">
    <molecule>NACHT, LRR and PYD domains-containing protein 1b, C-terminus</molecule>
    <text evidence="22 23 24">Constitutes the active part of the Nlrp1b inflammasome (PubMed:30872531, PubMed:30872533). In absence of pathogens and other damage-associated signals, interacts with the N-terminal part of Nlrp1b (NACHT, LRR and PYD domains-containing protein 1b, N-terminus), preventing activation of the Nlrp1b inflammasome (PubMed:30872531, PubMed:30872533). In response to pathogen-associated signals, the N-terminal part of Nlrp1b is degraded by the proteasome, releasing this form, which polymerizes to form the Nlrp1b inflammasome complex: the Nlrp1b inflammasome complex then directly recruits pro-caspase-1 (proCASP1) and promotes caspase-1 (CASP1) activation, leading to gasdermin-D (GSDMD) cleavage and subsequent pyroptosis (PubMed:30872531, PubMed:30872533, PubMed:31268597).</text>
</comment>
<comment type="activity regulation">
    <text evidence="1 7 9 10 12 13 15 17 18 19 20 21 22 23 25 26 27">Activated by cleavage by B.anthracis lethal toxin (LT) endopeptidase: cleavage by LT promotes ubiquitination and degradation of the N-terminal part, releasing the cleaved C-terminal part of the protein (NACHT, LRR and PYD domains-containing protein 1b, C-terminus), which polymerizes and forms the Nlrp1b inflammasome (PubMed:19124602, PubMed:19651869, PubMed:19949100, PubMed:22536155, PubMed:23818853, PubMed:24492532, PubMed:24935976, PubMed:30872531, PubMed:31383852). Activated by S.flexneri IpaH7.8, an E3 ubiquitin ligase that mediates ubiquitination and degradation of the N-terminal part, releasing the cleaved C-terminal part of the protein, which polymerizes and forms the Nlrp1b inflammasome (PubMed:30872533). Nlrp1b inflammasome is inhibited by DPP8 and DPP9, which sequester the C-terminal fragment of Nlrp1b (NACHT, LRR and PYD domains-containing protein 1b, C-terminus) in a ternary complex, thereby preventing Nlrp1b oligomerization and activation (PubMed:29396289, PubMed:31525884). Nlrp1b inflammasome is activated by Val-boroPro (Talabostat, PT-100), an inhibitor of dipeptidyl peptidases DPP8 and DPP9 (PubMed:29396289, PubMed:30872531, PubMed:31383852, PubMed:31525884). Val-boroPro relieves inhibition of DPP8 and/or DPP9 by promoting disruption of the ternary complex, releasing its C-terminal part from autoinhibition (By similarity). Activated by metabolic inhibitors, such as 2-deoxy-D-glucose and sodium azide, by nutrient deprivation and hypoxia, possibly due to a decrease in cytosolic ATP (PubMed:23230290, PubMed:24935976). Also activated by Toxoplasma gondii (PubMed:24218483). Not activated by muramyl dipeptide, nor by full-length bacterial peptidoglycan (PubMed:22753929). Contrary to its human ortholog, not activated by positive-strand RNA virus such as Semliki Forrest virus or long dsRNA (PubMed:33243852).</text>
</comment>
<comment type="subunit">
    <text evidence="1 14 26">Interacts with DPP9; leading to inhibit activation of the inflammasome (PubMed:31525884). DPP9 acts via formation of a ternary complex, composed of a DPP9 homodimer, one full-length Nlrp1b protein, and one cleaved C-terminus of Nlrp1b (NACHT, LRR and PYD domains-containing protein 1b, C-terminus) (By similarity). Interacts with DPP8; leading to inhibit activation of the inflammasome, probably via formation of a ternary complex with DPP8 (PubMed:31525884). Interacts (via LRR repeats) with BCL2 and BCL2L1 (via the loop between motifs BH4 and BH3) (By similarity). Interacts with NOD2; this interaction may increase IL1B release (By similarity). Interacts with EIF2AK2/PKR; this interaction requires EIF2AK2 activity, is accompanied by EIF2AK2 autophosphorylation and promotes inflammasome assembly in response to B.anthracis lethal toxin (PubMed:22801494). Interacts with MEFV; this interaction targets Nlrp1b to degradation by autophagy, hence preventing excessive IL1B- and IL18-mediated inflammation (By similarity).</text>
</comment>
<comment type="subunit">
    <molecule>NACHT, LRR and PYD domains-containing protein 1b, N-terminus</molecule>
    <text evidence="22 23">Interacts with the C-terminal part of Nlrp1b (NACHT, LRR and PYD domains-containing protein 1b, C-terminus) in absence of pathogens and other damage-associated signals.</text>
</comment>
<comment type="subunit">
    <molecule>NACHT, LRR and PYD domains-containing protein 1b, C-terminus</molecule>
    <text evidence="7 9 12 19 22 23">Interacts with the N-terminal part of Nlrp1b (NACHT, LRR and PYD domains-containing protein 1b, N-terminus) in absence of pathogens and other damage-associated signals (PubMed:30872531, PubMed:30872533). Homomultimer; forms the Nlrp1b inflammasome polymeric complex, a filament composed of homopolymers of this form in response to pathogens and other damage-associated signals (PubMed:19124602, PubMed:19651869, PubMed:22536155, PubMed:24492532, PubMed:30872531, PubMed:30872533). The Nlrp1b inflammasome polymeric complex directly recruits pro-caspase-1 (proCASP1) independently of PYCARD/ASC (PubMed:19124602, PubMed:19651869, PubMed:24492532). Interacts (via CARD domain) with CASP1 (via CARD domain); leading to CASP1 activation (PubMed:19651869).</text>
</comment>
<comment type="subcellular location">
    <subcellularLocation>
        <location evidence="7">Cytoplasm</location>
    </subcellularLocation>
    <subcellularLocation>
        <location evidence="7">Cytoplasm</location>
        <location evidence="7">Cytosol</location>
    </subcellularLocation>
    <subcellularLocation>
        <location evidence="7">Membrane</location>
    </subcellularLocation>
</comment>
<comment type="subcellular location">
    <molecule>NACHT, LRR and PYD domains-containing protein 1b, C-terminus</molecule>
    <subcellularLocation>
        <location evidence="19 23">Inflammasome</location>
    </subcellularLocation>
</comment>
<comment type="tissue specificity">
    <text evidence="6 16">Widely expressed, including in macrophages.</text>
</comment>
<comment type="domain">
    <text evidence="1">The CARD domain is involved in the interaction with CASP1 and CASP4/CASP11.</text>
</comment>
<comment type="domain">
    <text evidence="9 17 20">The leucine-rich repeat (LRR) domain may be involved in autoinhibition in the absence of activating signal, possibly through intramolecular interaction with the NACHT domain.</text>
</comment>
<comment type="domain">
    <text evidence="12 17">The FIIND (domain with function to find) region is involved in homomerization, but not in CASP1-binding (PubMed:22536155). Autocatalytic cleavage in this region occurs constitutively, prior to activation signals, and is required for inflammasome activity (IL1B release), possibly by facilitating CASP1 binding. Both N- and C-terminal fragments remain associated (PubMed:22536155, PubMed:23818853).</text>
</comment>
<comment type="domain">
    <molecule>NACHT, LRR and PYD domains-containing protein 1b, C-terminus</molecule>
    <text evidence="1">The C-terminal part of Nlrp1b oligomerizes to form the core of the Nlrp1b inflammasome filament: in the filament, the CARD domains form a central helical filaments that are promoted by oligomerized, but flexibly linked, UPA regions surrounding the filaments. The UPA region reduces the threshold needed for filament formation and signaling.</text>
</comment>
<comment type="PTM">
    <molecule>NACHT, LRR and PYD domains-containing protein 1b allele 1</molecule>
    <text evidence="17">Autocatalytically cleaved (PubMed:23818853). Autocatalytic cleavage in FIIND region occurs constitutively, prior to activation signals, and is required for inflammasome activity (IL1B release), possibly by facilitating CASP1 binding. Both N- and C-terminal parts remain associated non-covalently (PubMed:23818853).</text>
</comment>
<comment type="PTM">
    <molecule>NACHT, LRR and PYD domains-containing protein 1b, N-terminus</molecule>
    <text evidence="22 24">Ubiquitinated by UBR2, a component of the N-end rule pathway in response to pathogens and other damage-associated signals, leading to its degradation by the proteasome and subsequent release of the cleaved C-terminal part of the protein (NACHT, LRR and PYD domains-containing protein 1b, C-terminus), which polymerizes and forms the Nlrp1b inflammasome.</text>
</comment>
<comment type="PTM">
    <molecule>NACHT, LRR and PYD domains-containing protein 1b, N-terminus</molecule>
    <text evidence="7 9 10 12 17 19 20 22">(Microbial infection) Cleavage by B.anthracis lethal toxin (LT) endopeptidase promotes ubiquitination and degradation of the N-terminal part, releasing the cleaved C-terminal part of the protein (NACHT, LRR and PYD domains-containing protein 1b, C-terminus), which polymerizes and forms the Nlrp1b inflammasome.</text>
</comment>
<comment type="PTM">
    <molecule>NACHT, LRR and PYD domains-containing protein 1b, N-terminus</molecule>
    <text evidence="23">(Microbial infection) Ubiquitinated by S.flexneri IpaH7.8, leading to its degradation by the proteasome and subsequent release of the cleaved C-terminal part of the protein (NACHT, LRR and PYD domains-containing protein 1b, C-terminus), which polymerizes and forms the Nlrp1b inflammasome.</text>
</comment>
<comment type="polymorphism">
    <text evidence="6 10 11 28">Nlrp1b gene is extremely polymorphic. 5 alleles have been described in 18 inbred strains: 1 (this entry), 2 (AC A1Z198), 3 (AC Q2LKV5), 4 (AC Q2LKV2) and 5 (AC Q0GKD5). These alleles define susceptibility to B.anthracis lethal toxin (LT). Alleles 1 (carried by strains 129S1/SvImJ, BALB/cJ, C3H/HeJ, CBA/J, FVB/NJ, NON/ShiLtJ, NZO (NZO/HlLtJ) and SWR/J) and 5 (CAST/EiJ) confer macrophage susceptibility to LT. Strains with macrophages resistant to anthrax LT carry alleles 2 (A/J, C57BL/6J and I/LnJ), 3 (AKR/J, NOD/LtJ and SJL/J) or 4 (DBA/2J, P/J and SM/J). Sensitivity to LT leads to IL1B release, macrophage pyroptosis and neutrophil recruitment. This early inflammatory response confers increased resistance to infection by B. anthracis spores (PubMed:16429160, PubMed:19949100, PubMed:21170303). The sequence shown in this entry is that of allele 1 (PubMed:16429160).</text>
</comment>
<comment type="disruption phenotype">
    <text evidence="13">No visible phenotype under usual housing conditions. When challenged with intratracheal instillation of B.anthracis lethal toxin (LT), mutant animals are protected from lung damages caused by sustained inflammation. Macrophages isolated from mutant animals are resistant LT.</text>
</comment>
<comment type="miscellaneous">
    <text evidence="16 31">Three tandem Nrlp1 paralogs, Nrlp1a, Nrlp1b and Nrlp1c, have been identified. Nlrp1c is predicted to be a pseudogene. Neither Nlrp1a, nor Nrlp1c are expressed in anthrax lethal toxin susceptible strains, hence neither of them is thought to play an important role in this phenotype.</text>
</comment>
<comment type="miscellaneous">
    <text evidence="8">In macrophages and dendritic cells, NLRP1 inflammasome activation of CASP1 and IL1B maturation can be dampened by direct contact with activated effector and memory T-cells. This effect may be mediated by hexameric TNF ligands, such as CD40LG.</text>
</comment>
<comment type="similarity">
    <text evidence="30">Belongs to the NLRP family.</text>
</comment>